<protein>
    <recommendedName>
        <fullName evidence="1">Probable septum site-determining protein MinC</fullName>
    </recommendedName>
</protein>
<evidence type="ECO:0000255" key="1">
    <source>
        <dbReference type="HAMAP-Rule" id="MF_00267"/>
    </source>
</evidence>
<organism>
    <name type="scientific">Clostridioides difficile (strain 630)</name>
    <name type="common">Peptoclostridium difficile</name>
    <dbReference type="NCBI Taxonomy" id="272563"/>
    <lineage>
        <taxon>Bacteria</taxon>
        <taxon>Bacillati</taxon>
        <taxon>Bacillota</taxon>
        <taxon>Clostridia</taxon>
        <taxon>Peptostreptococcales</taxon>
        <taxon>Peptostreptococcaceae</taxon>
        <taxon>Clostridioides</taxon>
    </lineage>
</organism>
<proteinExistence type="inferred from homology"/>
<reference key="1">
    <citation type="journal article" date="2006" name="Nat. Genet.">
        <title>The multidrug-resistant human pathogen Clostridium difficile has a highly mobile, mosaic genome.</title>
        <authorList>
            <person name="Sebaihia M."/>
            <person name="Wren B.W."/>
            <person name="Mullany P."/>
            <person name="Fairweather N.F."/>
            <person name="Minton N."/>
            <person name="Stabler R."/>
            <person name="Thomson N.R."/>
            <person name="Roberts A.P."/>
            <person name="Cerdeno-Tarraga A.M."/>
            <person name="Wang H."/>
            <person name="Holden M.T.G."/>
            <person name="Wright A."/>
            <person name="Churcher C."/>
            <person name="Quail M.A."/>
            <person name="Baker S."/>
            <person name="Bason N."/>
            <person name="Brooks K."/>
            <person name="Chillingworth T."/>
            <person name="Cronin A."/>
            <person name="Davis P."/>
            <person name="Dowd L."/>
            <person name="Fraser A."/>
            <person name="Feltwell T."/>
            <person name="Hance Z."/>
            <person name="Holroyd S."/>
            <person name="Jagels K."/>
            <person name="Moule S."/>
            <person name="Mungall K."/>
            <person name="Price C."/>
            <person name="Rabbinowitsch E."/>
            <person name="Sharp S."/>
            <person name="Simmonds M."/>
            <person name="Stevens K."/>
            <person name="Unwin L."/>
            <person name="Whithead S."/>
            <person name="Dupuy B."/>
            <person name="Dougan G."/>
            <person name="Barrell B."/>
            <person name="Parkhill J."/>
        </authorList>
    </citation>
    <scope>NUCLEOTIDE SEQUENCE [LARGE SCALE GENOMIC DNA]</scope>
    <source>
        <strain>630</strain>
    </source>
</reference>
<comment type="function">
    <text evidence="1">Cell division inhibitor that blocks the formation of polar Z ring septums. Rapidly oscillates between the poles of the cell to destabilize FtsZ filaments that have formed before they mature into polar Z rings. Prevents FtsZ polymerization.</text>
</comment>
<comment type="subunit">
    <text evidence="1">Interacts with MinD and FtsZ.</text>
</comment>
<comment type="similarity">
    <text evidence="1">Belongs to the MinC family.</text>
</comment>
<name>MINC_CLOD6</name>
<sequence length="227" mass="25094">MSLREICSQELVEFKGNKRGIIVNIKREAPFEEIQEKIINKLEAYVGFFNGAKISKINSDCLTDMEILELKEGITSRFDVEFVEDQKIEENSNFPTKYVNTLRSGENIEFEGDVVILNDMKPGSKVLSKSNTVVMGDINAGAKVVAGGNVFVMGKIEGFVHAGAEGNEFAYVVAGNLNPKILQIADNIAEAPDDEENYESESEISPEIAFVSNGRIVIESYLSKLDK</sequence>
<feature type="chain" id="PRO_1000191239" description="Probable septum site-determining protein MinC">
    <location>
        <begin position="1"/>
        <end position="227"/>
    </location>
</feature>
<dbReference type="EMBL" id="AM180355">
    <property type="protein sequence ID" value="CAJ68002.1"/>
    <property type="molecule type" value="Genomic_DNA"/>
</dbReference>
<dbReference type="RefSeq" id="WP_003428479.1">
    <property type="nucleotide sequence ID" value="NZ_JAUPES010000006.1"/>
</dbReference>
<dbReference type="RefSeq" id="YP_001087641.1">
    <property type="nucleotide sequence ID" value="NC_009089.1"/>
</dbReference>
<dbReference type="SMR" id="Q18B13"/>
<dbReference type="STRING" id="272563.CD630_11490"/>
<dbReference type="EnsemblBacteria" id="CAJ68002">
    <property type="protein sequence ID" value="CAJ68002"/>
    <property type="gene ID" value="CD630_11490"/>
</dbReference>
<dbReference type="GeneID" id="66353559"/>
<dbReference type="KEGG" id="cdf:CD630_11490"/>
<dbReference type="KEGG" id="pdc:CDIF630_01296"/>
<dbReference type="PATRIC" id="fig|272563.120.peg.1198"/>
<dbReference type="eggNOG" id="COG0850">
    <property type="taxonomic scope" value="Bacteria"/>
</dbReference>
<dbReference type="OrthoDB" id="9790810at2"/>
<dbReference type="PhylomeDB" id="Q18B13"/>
<dbReference type="BioCyc" id="PDIF272563:G12WB-1279-MONOMER"/>
<dbReference type="Proteomes" id="UP000001978">
    <property type="component" value="Chromosome"/>
</dbReference>
<dbReference type="GO" id="GO:0000902">
    <property type="term" value="P:cell morphogenesis"/>
    <property type="evidence" value="ECO:0007669"/>
    <property type="project" value="InterPro"/>
</dbReference>
<dbReference type="GO" id="GO:0000917">
    <property type="term" value="P:division septum assembly"/>
    <property type="evidence" value="ECO:0007669"/>
    <property type="project" value="UniProtKB-KW"/>
</dbReference>
<dbReference type="GO" id="GO:1901891">
    <property type="term" value="P:regulation of cell septum assembly"/>
    <property type="evidence" value="ECO:0007669"/>
    <property type="project" value="InterPro"/>
</dbReference>
<dbReference type="Gene3D" id="2.160.20.70">
    <property type="match status" value="2"/>
</dbReference>
<dbReference type="HAMAP" id="MF_00267">
    <property type="entry name" value="MinC"/>
    <property type="match status" value="1"/>
</dbReference>
<dbReference type="InterPro" id="IPR016098">
    <property type="entry name" value="CAP/MinC_C"/>
</dbReference>
<dbReference type="InterPro" id="IPR013033">
    <property type="entry name" value="MinC"/>
</dbReference>
<dbReference type="InterPro" id="IPR036145">
    <property type="entry name" value="MinC_C_sf"/>
</dbReference>
<dbReference type="InterPro" id="IPR005526">
    <property type="entry name" value="Septum_form_inhib_MinC_C"/>
</dbReference>
<dbReference type="PANTHER" id="PTHR34108">
    <property type="entry name" value="SEPTUM SITE-DETERMINING PROTEIN MINC"/>
    <property type="match status" value="1"/>
</dbReference>
<dbReference type="PANTHER" id="PTHR34108:SF1">
    <property type="entry name" value="SEPTUM SITE-DETERMINING PROTEIN MINC"/>
    <property type="match status" value="1"/>
</dbReference>
<dbReference type="Pfam" id="PF03775">
    <property type="entry name" value="MinC_C"/>
    <property type="match status" value="1"/>
</dbReference>
<dbReference type="SUPFAM" id="SSF63848">
    <property type="entry name" value="Cell-division inhibitor MinC, C-terminal domain"/>
    <property type="match status" value="2"/>
</dbReference>
<keyword id="KW-0131">Cell cycle</keyword>
<keyword id="KW-0132">Cell division</keyword>
<keyword id="KW-1185">Reference proteome</keyword>
<keyword id="KW-0717">Septation</keyword>
<accession>Q18B13</accession>
<gene>
    <name evidence="1" type="primary">minC</name>
    <name type="ordered locus">CD630_11490</name>
</gene>